<reference key="1">
    <citation type="journal article" date="2003" name="Microbiology">
        <title>The complete genome sequence of the avian pathogen Mycoplasma gallisepticum strain R(low).</title>
        <authorList>
            <person name="Papazisi L."/>
            <person name="Gorton T.S."/>
            <person name="Kutish G."/>
            <person name="Markham P.F."/>
            <person name="Browning G.F."/>
            <person name="Nguyen D.K."/>
            <person name="Swartzell S."/>
            <person name="Madan A."/>
            <person name="Mahairas G."/>
            <person name="Geary S.J."/>
        </authorList>
    </citation>
    <scope>NUCLEOTIDE SEQUENCE [LARGE SCALE GENOMIC DNA]</scope>
    <source>
        <strain>R(low / passage 15 / clone 2)</strain>
    </source>
</reference>
<reference key="2">
    <citation type="journal article" date="1995" name="FEMS Microbiol. Lett.">
        <title>Mycoplasma gallisepticum 16S rRNA genes.</title>
        <authorList>
            <person name="Skamrov A.V."/>
            <person name="Gol'dman M.A."/>
            <person name="Klasova J."/>
            <person name="Bibilashvili R.S."/>
        </authorList>
    </citation>
    <scope>NUCLEOTIDE SEQUENCE [GENOMIC DNA] OF 418-582</scope>
    <source>
        <strain>A5969Var.B</strain>
    </source>
</reference>
<feature type="chain" id="PRO_0000210620" description="Uncharacterized protein MG447 homolog MYCGA2290">
    <location>
        <begin position="1"/>
        <end position="582"/>
    </location>
</feature>
<feature type="transmembrane region" description="Helical" evidence="1">
    <location>
        <begin position="29"/>
        <end position="49"/>
    </location>
</feature>
<feature type="transmembrane region" description="Helical" evidence="1">
    <location>
        <begin position="117"/>
        <end position="137"/>
    </location>
</feature>
<feature type="transmembrane region" description="Helical" evidence="1">
    <location>
        <begin position="155"/>
        <end position="175"/>
    </location>
</feature>
<feature type="transmembrane region" description="Helical" evidence="1">
    <location>
        <begin position="225"/>
        <end position="245"/>
    </location>
</feature>
<feature type="transmembrane region" description="Helical" evidence="1">
    <location>
        <begin position="254"/>
        <end position="274"/>
    </location>
</feature>
<feature type="transmembrane region" description="Helical" evidence="1">
    <location>
        <begin position="287"/>
        <end position="307"/>
    </location>
</feature>
<feature type="transmembrane region" description="Helical" evidence="1">
    <location>
        <begin position="329"/>
        <end position="349"/>
    </location>
</feature>
<feature type="transmembrane region" description="Helical" evidence="1">
    <location>
        <begin position="376"/>
        <end position="396"/>
    </location>
</feature>
<feature type="transmembrane region" description="Helical" evidence="1">
    <location>
        <begin position="432"/>
        <end position="452"/>
    </location>
</feature>
<feature type="transmembrane region" description="Helical" evidence="1">
    <location>
        <begin position="458"/>
        <end position="478"/>
    </location>
</feature>
<feature type="transmembrane region" description="Helical" evidence="1">
    <location>
        <begin position="491"/>
        <end position="511"/>
    </location>
</feature>
<feature type="transmembrane region" description="Helical" evidence="1">
    <location>
        <begin position="523"/>
        <end position="543"/>
    </location>
</feature>
<accession>P53660</accession>
<name>Y229_MYCGA</name>
<keyword id="KW-1003">Cell membrane</keyword>
<keyword id="KW-0472">Membrane</keyword>
<keyword id="KW-1185">Reference proteome</keyword>
<keyword id="KW-0812">Transmembrane</keyword>
<keyword id="KW-1133">Transmembrane helix</keyword>
<proteinExistence type="predicted"/>
<comment type="subcellular location">
    <subcellularLocation>
        <location evidence="2">Cell membrane</location>
        <topology evidence="2">Multi-pass membrane protein</topology>
    </subcellularLocation>
</comment>
<dbReference type="EMBL" id="AE015450">
    <property type="protein sequence ID" value="AAP56579.2"/>
    <property type="molecule type" value="Genomic_DNA"/>
</dbReference>
<dbReference type="EMBL" id="L08897">
    <property type="protein sequence ID" value="AAA98919.1"/>
    <property type="molecule type" value="Genomic_DNA"/>
</dbReference>
<dbReference type="RefSeq" id="WP_011113471.1">
    <property type="nucleotide sequence ID" value="NC_004829.2"/>
</dbReference>
<dbReference type="SMR" id="P53660"/>
<dbReference type="KEGG" id="mga:MGA_1037"/>
<dbReference type="PATRIC" id="fig|233150.7.peg.255"/>
<dbReference type="HOGENOM" id="CLU_468356_0_0_14"/>
<dbReference type="OrthoDB" id="396185at2"/>
<dbReference type="Proteomes" id="UP000001418">
    <property type="component" value="Chromosome"/>
</dbReference>
<dbReference type="GO" id="GO:0005886">
    <property type="term" value="C:plasma membrane"/>
    <property type="evidence" value="ECO:0007669"/>
    <property type="project" value="UniProtKB-SubCell"/>
</dbReference>
<dbReference type="GO" id="GO:0015297">
    <property type="term" value="F:antiporter activity"/>
    <property type="evidence" value="ECO:0007669"/>
    <property type="project" value="InterPro"/>
</dbReference>
<dbReference type="GO" id="GO:0042910">
    <property type="term" value="F:xenobiotic transmembrane transporter activity"/>
    <property type="evidence" value="ECO:0007669"/>
    <property type="project" value="InterPro"/>
</dbReference>
<dbReference type="CDD" id="cd12082">
    <property type="entry name" value="MATE_like"/>
    <property type="match status" value="1"/>
</dbReference>
<dbReference type="InterPro" id="IPR002528">
    <property type="entry name" value="MATE_fam"/>
</dbReference>
<dbReference type="InterPro" id="IPR051327">
    <property type="entry name" value="MATE_MepA_subfamily"/>
</dbReference>
<dbReference type="PANTHER" id="PTHR43823:SF3">
    <property type="entry name" value="MULTIDRUG EXPORT PROTEIN MEPA"/>
    <property type="match status" value="1"/>
</dbReference>
<dbReference type="PANTHER" id="PTHR43823">
    <property type="entry name" value="SPORULATION PROTEIN YKVU"/>
    <property type="match status" value="1"/>
</dbReference>
<dbReference type="Pfam" id="PF01554">
    <property type="entry name" value="MatE"/>
    <property type="match status" value="1"/>
</dbReference>
<evidence type="ECO:0000255" key="1"/>
<evidence type="ECO:0000305" key="2"/>
<gene>
    <name type="ordered locus">MYCGA2290</name>
    <name type="ORF">MGA_1037</name>
</gene>
<organism>
    <name type="scientific">Mycoplasmoides gallisepticum (strain R(low / passage 15 / clone 2))</name>
    <name type="common">Mycoplasma gallisepticum</name>
    <dbReference type="NCBI Taxonomy" id="710127"/>
    <lineage>
        <taxon>Bacteria</taxon>
        <taxon>Bacillati</taxon>
        <taxon>Mycoplasmatota</taxon>
        <taxon>Mycoplasmoidales</taxon>
        <taxon>Mycoplasmoidaceae</taxon>
        <taxon>Mycoplasmoides</taxon>
    </lineage>
</organism>
<sequence>MPLNTNNEKLTSKNVLNDRITKRFNDRRLFIVLLRFIIPSILVSFFAALYIFVDQIMIVKFVTRSDLNPDSIFDNDYFNFVDSNGQSWIYQDYLTASNNLKIPPFNINDLIRAAISISAPITVIINALTLLITMGLANQFSKALGRGDEEKIKEVWATGFITNVIVSIATSMIIVGVAKTWLTSSANGTMNRSLESLDTNSRYGYIVSIFFSRFRELQVQNASSYVYILAGLFTIQTFNQMYFLLNQSEGRQLFISIIPPLANLINILFDYLLIRYTSAGIAAAAYATVIGWSLSCLAYVIYNIVLIKKKATHLEYREIFRKGHFNWNYLYLIILIGLASFFRNAALSVSNGIFQTNLVTITEKIQPNLPPNYYQSIFGSVTPISNLMLQSVWGLIHGSRSLCGFKFGQRNFKDITKIYWYVPLIAFSYSSIVYLLFGFGLNNIFLINLFNIQGADNLVVSNLVLRITLVQSIFIALSMNAQLLFQSTQRIGMAWIASLMQGLFTFAPVFFTMYNLAIDTNNIYLYIWIQPINAILTCIGNWIISIPFAHKYREFVSKRFDIGTMLDKYLNKTKNPKVKAKQ</sequence>
<protein>
    <recommendedName>
        <fullName>Uncharacterized protein MG447 homolog MYCGA2290</fullName>
    </recommendedName>
</protein>